<feature type="chain" id="PRO_1000100904" description="ATP-dependent protease subunit HslV">
    <location>
        <begin position="1"/>
        <end position="176"/>
    </location>
</feature>
<feature type="active site" evidence="1">
    <location>
        <position position="2"/>
    </location>
</feature>
<feature type="binding site" evidence="1">
    <location>
        <position position="157"/>
    </location>
    <ligand>
        <name>Na(+)</name>
        <dbReference type="ChEBI" id="CHEBI:29101"/>
    </ligand>
</feature>
<feature type="binding site" evidence="1">
    <location>
        <position position="160"/>
    </location>
    <ligand>
        <name>Na(+)</name>
        <dbReference type="ChEBI" id="CHEBI:29101"/>
    </ligand>
</feature>
<feature type="binding site" evidence="1">
    <location>
        <position position="163"/>
    </location>
    <ligand>
        <name>Na(+)</name>
        <dbReference type="ChEBI" id="CHEBI:29101"/>
    </ligand>
</feature>
<evidence type="ECO:0000255" key="1">
    <source>
        <dbReference type="HAMAP-Rule" id="MF_00248"/>
    </source>
</evidence>
<name>HSLV_PROMH</name>
<accession>B4F172</accession>
<protein>
    <recommendedName>
        <fullName evidence="1">ATP-dependent protease subunit HslV</fullName>
        <ecNumber evidence="1">3.4.25.2</ecNumber>
    </recommendedName>
</protein>
<organism>
    <name type="scientific">Proteus mirabilis (strain HI4320)</name>
    <dbReference type="NCBI Taxonomy" id="529507"/>
    <lineage>
        <taxon>Bacteria</taxon>
        <taxon>Pseudomonadati</taxon>
        <taxon>Pseudomonadota</taxon>
        <taxon>Gammaproteobacteria</taxon>
        <taxon>Enterobacterales</taxon>
        <taxon>Morganellaceae</taxon>
        <taxon>Proteus</taxon>
    </lineage>
</organism>
<keyword id="KW-0021">Allosteric enzyme</keyword>
<keyword id="KW-0963">Cytoplasm</keyword>
<keyword id="KW-0378">Hydrolase</keyword>
<keyword id="KW-0479">Metal-binding</keyword>
<keyword id="KW-0645">Protease</keyword>
<keyword id="KW-1185">Reference proteome</keyword>
<keyword id="KW-0915">Sodium</keyword>
<keyword id="KW-0346">Stress response</keyword>
<keyword id="KW-0888">Threonine protease</keyword>
<comment type="function">
    <text evidence="1">Protease subunit of a proteasome-like degradation complex believed to be a general protein degrading machinery.</text>
</comment>
<comment type="catalytic activity">
    <reaction evidence="1">
        <text>ATP-dependent cleavage of peptide bonds with broad specificity.</text>
        <dbReference type="EC" id="3.4.25.2"/>
    </reaction>
</comment>
<comment type="activity regulation">
    <text evidence="1">Allosterically activated by HslU binding.</text>
</comment>
<comment type="subunit">
    <text evidence="1">A double ring-shaped homohexamer of HslV is capped on each side by a ring-shaped HslU homohexamer. The assembly of the HslU/HslV complex is dependent on binding of ATP.</text>
</comment>
<comment type="subcellular location">
    <subcellularLocation>
        <location evidence="1">Cytoplasm</location>
    </subcellularLocation>
</comment>
<comment type="similarity">
    <text evidence="1">Belongs to the peptidase T1B family. HslV subfamily.</text>
</comment>
<dbReference type="EC" id="3.4.25.2" evidence="1"/>
<dbReference type="EMBL" id="AM942759">
    <property type="protein sequence ID" value="CAR46301.1"/>
    <property type="molecule type" value="Genomic_DNA"/>
</dbReference>
<dbReference type="RefSeq" id="WP_004246416.1">
    <property type="nucleotide sequence ID" value="NC_010554.1"/>
</dbReference>
<dbReference type="SMR" id="B4F172"/>
<dbReference type="MEROPS" id="T01.006"/>
<dbReference type="EnsemblBacteria" id="CAR46301">
    <property type="protein sequence ID" value="CAR46301"/>
    <property type="gene ID" value="PMI3216"/>
</dbReference>
<dbReference type="GeneID" id="6799898"/>
<dbReference type="KEGG" id="pmr:PMI3216"/>
<dbReference type="eggNOG" id="COG5405">
    <property type="taxonomic scope" value="Bacteria"/>
</dbReference>
<dbReference type="HOGENOM" id="CLU_093872_1_0_6"/>
<dbReference type="Proteomes" id="UP000008319">
    <property type="component" value="Chromosome"/>
</dbReference>
<dbReference type="GO" id="GO:0009376">
    <property type="term" value="C:HslUV protease complex"/>
    <property type="evidence" value="ECO:0007669"/>
    <property type="project" value="UniProtKB-UniRule"/>
</dbReference>
<dbReference type="GO" id="GO:0005839">
    <property type="term" value="C:proteasome core complex"/>
    <property type="evidence" value="ECO:0007669"/>
    <property type="project" value="InterPro"/>
</dbReference>
<dbReference type="GO" id="GO:0046872">
    <property type="term" value="F:metal ion binding"/>
    <property type="evidence" value="ECO:0007669"/>
    <property type="project" value="UniProtKB-KW"/>
</dbReference>
<dbReference type="GO" id="GO:0004298">
    <property type="term" value="F:threonine-type endopeptidase activity"/>
    <property type="evidence" value="ECO:0007669"/>
    <property type="project" value="UniProtKB-KW"/>
</dbReference>
<dbReference type="GO" id="GO:0051603">
    <property type="term" value="P:proteolysis involved in protein catabolic process"/>
    <property type="evidence" value="ECO:0007669"/>
    <property type="project" value="InterPro"/>
</dbReference>
<dbReference type="CDD" id="cd01913">
    <property type="entry name" value="protease_HslV"/>
    <property type="match status" value="1"/>
</dbReference>
<dbReference type="FunFam" id="3.60.20.10:FF:000002">
    <property type="entry name" value="ATP-dependent protease subunit HslV"/>
    <property type="match status" value="1"/>
</dbReference>
<dbReference type="Gene3D" id="3.60.20.10">
    <property type="entry name" value="Glutamine Phosphoribosylpyrophosphate, subunit 1, domain 1"/>
    <property type="match status" value="1"/>
</dbReference>
<dbReference type="HAMAP" id="MF_00248">
    <property type="entry name" value="HslV"/>
    <property type="match status" value="1"/>
</dbReference>
<dbReference type="InterPro" id="IPR022281">
    <property type="entry name" value="ATP-dep_Prtase_HsIV_su"/>
</dbReference>
<dbReference type="InterPro" id="IPR029055">
    <property type="entry name" value="Ntn_hydrolases_N"/>
</dbReference>
<dbReference type="InterPro" id="IPR001353">
    <property type="entry name" value="Proteasome_sua/b"/>
</dbReference>
<dbReference type="InterPro" id="IPR023333">
    <property type="entry name" value="Proteasome_suB-type"/>
</dbReference>
<dbReference type="NCBIfam" id="TIGR03692">
    <property type="entry name" value="ATP_dep_HslV"/>
    <property type="match status" value="1"/>
</dbReference>
<dbReference type="NCBIfam" id="NF003964">
    <property type="entry name" value="PRK05456.1"/>
    <property type="match status" value="1"/>
</dbReference>
<dbReference type="PANTHER" id="PTHR32194:SF0">
    <property type="entry name" value="ATP-DEPENDENT PROTEASE SUBUNIT HSLV"/>
    <property type="match status" value="1"/>
</dbReference>
<dbReference type="PANTHER" id="PTHR32194">
    <property type="entry name" value="METALLOPROTEASE TLDD"/>
    <property type="match status" value="1"/>
</dbReference>
<dbReference type="Pfam" id="PF00227">
    <property type="entry name" value="Proteasome"/>
    <property type="match status" value="1"/>
</dbReference>
<dbReference type="PIRSF" id="PIRSF039093">
    <property type="entry name" value="HslV"/>
    <property type="match status" value="1"/>
</dbReference>
<dbReference type="SUPFAM" id="SSF56235">
    <property type="entry name" value="N-terminal nucleophile aminohydrolases (Ntn hydrolases)"/>
    <property type="match status" value="1"/>
</dbReference>
<dbReference type="PROSITE" id="PS51476">
    <property type="entry name" value="PROTEASOME_BETA_2"/>
    <property type="match status" value="1"/>
</dbReference>
<proteinExistence type="inferred from homology"/>
<gene>
    <name evidence="1" type="primary">hslV</name>
    <name type="ordered locus">PMI3216</name>
</gene>
<sequence length="176" mass="19091">MTTIVSVRRNGQVVIGGDGQATMGNTVMKGNVRKVRRLYNDKVIAGFAGGTADAFTLFELFERKLELHQGHLTKAAVELAKDWRTDRMLRKLEALLAVADETTSLIITGNGDVVQPENDLIAIGSGGPYAQAAARAMLENTDLSAREIAEKALNIAGDICIYTNHNVNFEEISSKE</sequence>
<reference key="1">
    <citation type="journal article" date="2008" name="J. Bacteriol.">
        <title>Complete genome sequence of uropathogenic Proteus mirabilis, a master of both adherence and motility.</title>
        <authorList>
            <person name="Pearson M.M."/>
            <person name="Sebaihia M."/>
            <person name="Churcher C."/>
            <person name="Quail M.A."/>
            <person name="Seshasayee A.S."/>
            <person name="Luscombe N.M."/>
            <person name="Abdellah Z."/>
            <person name="Arrosmith C."/>
            <person name="Atkin B."/>
            <person name="Chillingworth T."/>
            <person name="Hauser H."/>
            <person name="Jagels K."/>
            <person name="Moule S."/>
            <person name="Mungall K."/>
            <person name="Norbertczak H."/>
            <person name="Rabbinowitsch E."/>
            <person name="Walker D."/>
            <person name="Whithead S."/>
            <person name="Thomson N.R."/>
            <person name="Rather P.N."/>
            <person name="Parkhill J."/>
            <person name="Mobley H.L.T."/>
        </authorList>
    </citation>
    <scope>NUCLEOTIDE SEQUENCE [LARGE SCALE GENOMIC DNA]</scope>
    <source>
        <strain>HI4320</strain>
    </source>
</reference>